<evidence type="ECO:0000255" key="1">
    <source>
        <dbReference type="HAMAP-Rule" id="MF_01429"/>
    </source>
</evidence>
<sequence>MSITLSDSAAARVNTFLANRGKGFGLRLGVRTSGCSGMAYVLEFVDEPTAEDTVFEDKGVKVVVDGKSLQFLDGTQLDFVKEGLNEGFKFSNPNVKDECGCGESFHV</sequence>
<comment type="function">
    <text evidence="1">Is able to transfer iron-sulfur clusters to apo-ferredoxin. Multiple cycles of [2Fe2S] cluster formation and transfer are observed, suggesting that IscA acts catalytically. Recruits intracellular free iron so as to provide iron for the assembly of transient iron-sulfur cluster in IscU in the presence of IscS, L-cysteine and the thioredoxin reductase system TrxA/TrxB.</text>
</comment>
<comment type="cofactor">
    <cofactor evidence="1">
        <name>Fe cation</name>
        <dbReference type="ChEBI" id="CHEBI:24875"/>
    </cofactor>
    <text evidence="1">Binds 2 iron ions per dimer. The dimer may bind additional iron ions.</text>
</comment>
<comment type="subunit">
    <text evidence="1">Homodimer; may form tetramers and higher multimers.</text>
</comment>
<comment type="similarity">
    <text evidence="1">Belongs to the HesB/IscA family.</text>
</comment>
<feature type="chain" id="PRO_1000145766" description="Iron-binding protein IscA">
    <location>
        <begin position="1"/>
        <end position="107"/>
    </location>
</feature>
<feature type="binding site" evidence="1">
    <location>
        <position position="35"/>
    </location>
    <ligand>
        <name>Fe cation</name>
        <dbReference type="ChEBI" id="CHEBI:24875"/>
    </ligand>
</feature>
<feature type="binding site" evidence="1">
    <location>
        <position position="99"/>
    </location>
    <ligand>
        <name>Fe cation</name>
        <dbReference type="ChEBI" id="CHEBI:24875"/>
    </ligand>
</feature>
<feature type="binding site" evidence="1">
    <location>
        <position position="101"/>
    </location>
    <ligand>
        <name>Fe cation</name>
        <dbReference type="ChEBI" id="CHEBI:24875"/>
    </ligand>
</feature>
<name>ISCA_SALSV</name>
<protein>
    <recommendedName>
        <fullName evidence="1">Iron-binding protein IscA</fullName>
    </recommendedName>
    <alternativeName>
        <fullName evidence="1">Iron-sulfur cluster assembly protein</fullName>
    </alternativeName>
</protein>
<accession>B4TRX3</accession>
<keyword id="KW-0408">Iron</keyword>
<keyword id="KW-0479">Metal-binding</keyword>
<reference key="1">
    <citation type="journal article" date="2011" name="J. Bacteriol.">
        <title>Comparative genomics of 28 Salmonella enterica isolates: evidence for CRISPR-mediated adaptive sublineage evolution.</title>
        <authorList>
            <person name="Fricke W.F."/>
            <person name="Mammel M.K."/>
            <person name="McDermott P.F."/>
            <person name="Tartera C."/>
            <person name="White D.G."/>
            <person name="Leclerc J.E."/>
            <person name="Ravel J."/>
            <person name="Cebula T.A."/>
        </authorList>
    </citation>
    <scope>NUCLEOTIDE SEQUENCE [LARGE SCALE GENOMIC DNA]</scope>
    <source>
        <strain>CVM19633</strain>
    </source>
</reference>
<dbReference type="EMBL" id="CP001127">
    <property type="protein sequence ID" value="ACF90656.1"/>
    <property type="molecule type" value="Genomic_DNA"/>
</dbReference>
<dbReference type="RefSeq" id="WP_000028952.1">
    <property type="nucleotide sequence ID" value="NC_011094.1"/>
</dbReference>
<dbReference type="SMR" id="B4TRX3"/>
<dbReference type="GeneID" id="66756972"/>
<dbReference type="KEGG" id="sew:SeSA_A2781"/>
<dbReference type="HOGENOM" id="CLU_069054_5_1_6"/>
<dbReference type="Proteomes" id="UP000001865">
    <property type="component" value="Chromosome"/>
</dbReference>
<dbReference type="GO" id="GO:0005829">
    <property type="term" value="C:cytosol"/>
    <property type="evidence" value="ECO:0007669"/>
    <property type="project" value="TreeGrafter"/>
</dbReference>
<dbReference type="GO" id="GO:0051537">
    <property type="term" value="F:2 iron, 2 sulfur cluster binding"/>
    <property type="evidence" value="ECO:0007669"/>
    <property type="project" value="TreeGrafter"/>
</dbReference>
<dbReference type="GO" id="GO:0005506">
    <property type="term" value="F:iron ion binding"/>
    <property type="evidence" value="ECO:0007669"/>
    <property type="project" value="UniProtKB-UniRule"/>
</dbReference>
<dbReference type="GO" id="GO:0016226">
    <property type="term" value="P:iron-sulfur cluster assembly"/>
    <property type="evidence" value="ECO:0007669"/>
    <property type="project" value="UniProtKB-UniRule"/>
</dbReference>
<dbReference type="FunFam" id="2.60.300.12:FF:000001">
    <property type="entry name" value="Iron-binding protein IscA"/>
    <property type="match status" value="1"/>
</dbReference>
<dbReference type="Gene3D" id="2.60.300.12">
    <property type="entry name" value="HesB-like domain"/>
    <property type="match status" value="1"/>
</dbReference>
<dbReference type="HAMAP" id="MF_01429">
    <property type="entry name" value="Fe_S_insert_IscA"/>
    <property type="match status" value="1"/>
</dbReference>
<dbReference type="InterPro" id="IPR050322">
    <property type="entry name" value="Fe-S_cluster_asmbl/transfer"/>
</dbReference>
<dbReference type="InterPro" id="IPR000361">
    <property type="entry name" value="FeS_biogenesis"/>
</dbReference>
<dbReference type="InterPro" id="IPR016092">
    <property type="entry name" value="FeS_cluster_insertion"/>
</dbReference>
<dbReference type="InterPro" id="IPR017870">
    <property type="entry name" value="FeS_cluster_insertion_CS"/>
</dbReference>
<dbReference type="InterPro" id="IPR035903">
    <property type="entry name" value="HesB-like_dom_sf"/>
</dbReference>
<dbReference type="InterPro" id="IPR011302">
    <property type="entry name" value="IscA_proteobacteria"/>
</dbReference>
<dbReference type="NCBIfam" id="TIGR00049">
    <property type="entry name" value="iron-sulfur cluster assembly accessory protein"/>
    <property type="match status" value="1"/>
</dbReference>
<dbReference type="NCBIfam" id="TIGR02011">
    <property type="entry name" value="IscA"/>
    <property type="match status" value="1"/>
</dbReference>
<dbReference type="NCBIfam" id="NF007049">
    <property type="entry name" value="PRK09502.1"/>
    <property type="match status" value="1"/>
</dbReference>
<dbReference type="PANTHER" id="PTHR10072:SF41">
    <property type="entry name" value="IRON-SULFUR CLUSTER ASSEMBLY 1 HOMOLOG, MITOCHONDRIAL"/>
    <property type="match status" value="1"/>
</dbReference>
<dbReference type="PANTHER" id="PTHR10072">
    <property type="entry name" value="IRON-SULFUR CLUSTER ASSEMBLY PROTEIN"/>
    <property type="match status" value="1"/>
</dbReference>
<dbReference type="Pfam" id="PF01521">
    <property type="entry name" value="Fe-S_biosyn"/>
    <property type="match status" value="1"/>
</dbReference>
<dbReference type="SUPFAM" id="SSF89360">
    <property type="entry name" value="HesB-like domain"/>
    <property type="match status" value="1"/>
</dbReference>
<dbReference type="PROSITE" id="PS01152">
    <property type="entry name" value="HESB"/>
    <property type="match status" value="1"/>
</dbReference>
<organism>
    <name type="scientific">Salmonella schwarzengrund (strain CVM19633)</name>
    <dbReference type="NCBI Taxonomy" id="439843"/>
    <lineage>
        <taxon>Bacteria</taxon>
        <taxon>Pseudomonadati</taxon>
        <taxon>Pseudomonadota</taxon>
        <taxon>Gammaproteobacteria</taxon>
        <taxon>Enterobacterales</taxon>
        <taxon>Enterobacteriaceae</taxon>
        <taxon>Salmonella</taxon>
    </lineage>
</organism>
<gene>
    <name evidence="1" type="primary">iscA</name>
    <name type="ordered locus">SeSA_A2781</name>
</gene>
<proteinExistence type="inferred from homology"/>